<evidence type="ECO:0000255" key="1">
    <source>
        <dbReference type="HAMAP-Rule" id="MF_01151"/>
    </source>
</evidence>
<evidence type="ECO:0000256" key="2">
    <source>
        <dbReference type="SAM" id="MobiDB-lite"/>
    </source>
</evidence>
<organism>
    <name type="scientific">Staphylococcus epidermidis (strain ATCC 12228 / FDA PCI 1200)</name>
    <dbReference type="NCBI Taxonomy" id="176280"/>
    <lineage>
        <taxon>Bacteria</taxon>
        <taxon>Bacillati</taxon>
        <taxon>Bacillota</taxon>
        <taxon>Bacilli</taxon>
        <taxon>Bacillales</taxon>
        <taxon>Staphylococcaceae</taxon>
        <taxon>Staphylococcus</taxon>
    </lineage>
</organism>
<comment type="function">
    <text evidence="1">Participates actively in the response to hyperosmotic and heat shock by preventing the aggregation of stress-denatured proteins, in association with DnaK and GrpE. It is the nucleotide exchange factor for DnaK and may function as a thermosensor. Unfolded proteins bind initially to DnaJ; upon interaction with the DnaJ-bound protein, DnaK hydrolyzes its bound ATP, resulting in the formation of a stable complex. GrpE releases ADP from DnaK; ATP binding to DnaK triggers the release of the substrate protein, thus completing the reaction cycle. Several rounds of ATP-dependent interactions between DnaJ, DnaK and GrpE are required for fully efficient folding.</text>
</comment>
<comment type="subunit">
    <text evidence="1">Homodimer.</text>
</comment>
<comment type="subcellular location">
    <subcellularLocation>
        <location evidence="1">Cytoplasm</location>
    </subcellularLocation>
</comment>
<comment type="similarity">
    <text evidence="1">Belongs to the GrpE family.</text>
</comment>
<reference key="1">
    <citation type="journal article" date="2003" name="Mol. Microbiol.">
        <title>Genome-based analysis of virulence genes in a non-biofilm-forming Staphylococcus epidermidis strain (ATCC 12228).</title>
        <authorList>
            <person name="Zhang Y.-Q."/>
            <person name="Ren S.-X."/>
            <person name="Li H.-L."/>
            <person name="Wang Y.-X."/>
            <person name="Fu G."/>
            <person name="Yang J."/>
            <person name="Qin Z.-Q."/>
            <person name="Miao Y.-G."/>
            <person name="Wang W.-Y."/>
            <person name="Chen R.-S."/>
            <person name="Shen Y."/>
            <person name="Chen Z."/>
            <person name="Yuan Z.-H."/>
            <person name="Zhao G.-P."/>
            <person name="Qu D."/>
            <person name="Danchin A."/>
            <person name="Wen Y.-M."/>
        </authorList>
    </citation>
    <scope>NUCLEOTIDE SEQUENCE [LARGE SCALE GENOMIC DNA]</scope>
    <source>
        <strain>ATCC 12228 / FDA PCI 1200</strain>
    </source>
</reference>
<proteinExistence type="inferred from homology"/>
<feature type="chain" id="PRO_0000113861" description="Protein GrpE">
    <location>
        <begin position="1"/>
        <end position="210"/>
    </location>
</feature>
<feature type="region of interest" description="Disordered" evidence="2">
    <location>
        <begin position="1"/>
        <end position="71"/>
    </location>
</feature>
<feature type="compositionally biased region" description="Acidic residues" evidence="2">
    <location>
        <begin position="11"/>
        <end position="23"/>
    </location>
</feature>
<feature type="compositionally biased region" description="Polar residues" evidence="2">
    <location>
        <begin position="24"/>
        <end position="35"/>
    </location>
</feature>
<feature type="compositionally biased region" description="Low complexity" evidence="2">
    <location>
        <begin position="36"/>
        <end position="46"/>
    </location>
</feature>
<feature type="compositionally biased region" description="Acidic residues" evidence="2">
    <location>
        <begin position="47"/>
        <end position="60"/>
    </location>
</feature>
<feature type="compositionally biased region" description="Basic and acidic residues" evidence="2">
    <location>
        <begin position="61"/>
        <end position="71"/>
    </location>
</feature>
<sequence>MSEKDQSVNNTEEDFNVETEDNQNDTNIENSVSNTDNSEANASDSENNSEESIKDEESESQDTKIKELEKLANDNEEKYLRLYAEFENYKRRIQKENQINATYKAQGVLTDILPSIDNIERALQIEGDDESFKSLQKGVQMVHESLLRALKDNGLEEILAEGKEFDPNLHQAVVQDDNPDFKSGEVTQELQKGYKLKDRVLRPSMVKVNQ</sequence>
<name>GRPE_STAES</name>
<dbReference type="EMBL" id="AE015929">
    <property type="protein sequence ID" value="AAO04867.1"/>
    <property type="molecule type" value="Genomic_DNA"/>
</dbReference>
<dbReference type="RefSeq" id="NP_764823.1">
    <property type="nucleotide sequence ID" value="NC_004461.1"/>
</dbReference>
<dbReference type="RefSeq" id="WP_001831117.1">
    <property type="nucleotide sequence ID" value="NZ_WBME01000008.1"/>
</dbReference>
<dbReference type="SMR" id="Q8CP16"/>
<dbReference type="DNASU" id="1056114"/>
<dbReference type="GeneID" id="50018616"/>
<dbReference type="KEGG" id="sep:SE_1268"/>
<dbReference type="PATRIC" id="fig|176280.10.peg.1237"/>
<dbReference type="eggNOG" id="COG0576">
    <property type="taxonomic scope" value="Bacteria"/>
</dbReference>
<dbReference type="HOGENOM" id="CLU_057217_5_1_9"/>
<dbReference type="OrthoDB" id="9812586at2"/>
<dbReference type="Proteomes" id="UP000001411">
    <property type="component" value="Chromosome"/>
</dbReference>
<dbReference type="GO" id="GO:0005737">
    <property type="term" value="C:cytoplasm"/>
    <property type="evidence" value="ECO:0007669"/>
    <property type="project" value="UniProtKB-SubCell"/>
</dbReference>
<dbReference type="GO" id="GO:0000774">
    <property type="term" value="F:adenyl-nucleotide exchange factor activity"/>
    <property type="evidence" value="ECO:0007669"/>
    <property type="project" value="InterPro"/>
</dbReference>
<dbReference type="GO" id="GO:0042803">
    <property type="term" value="F:protein homodimerization activity"/>
    <property type="evidence" value="ECO:0007669"/>
    <property type="project" value="InterPro"/>
</dbReference>
<dbReference type="GO" id="GO:0051087">
    <property type="term" value="F:protein-folding chaperone binding"/>
    <property type="evidence" value="ECO:0007669"/>
    <property type="project" value="InterPro"/>
</dbReference>
<dbReference type="GO" id="GO:0051082">
    <property type="term" value="F:unfolded protein binding"/>
    <property type="evidence" value="ECO:0007669"/>
    <property type="project" value="TreeGrafter"/>
</dbReference>
<dbReference type="GO" id="GO:0006457">
    <property type="term" value="P:protein folding"/>
    <property type="evidence" value="ECO:0007669"/>
    <property type="project" value="InterPro"/>
</dbReference>
<dbReference type="CDD" id="cd00446">
    <property type="entry name" value="GrpE"/>
    <property type="match status" value="1"/>
</dbReference>
<dbReference type="FunFam" id="2.30.22.10:FF:000001">
    <property type="entry name" value="Protein GrpE"/>
    <property type="match status" value="1"/>
</dbReference>
<dbReference type="Gene3D" id="3.90.20.20">
    <property type="match status" value="1"/>
</dbReference>
<dbReference type="Gene3D" id="2.30.22.10">
    <property type="entry name" value="Head domain of nucleotide exchange factor GrpE"/>
    <property type="match status" value="1"/>
</dbReference>
<dbReference type="HAMAP" id="MF_01151">
    <property type="entry name" value="GrpE"/>
    <property type="match status" value="1"/>
</dbReference>
<dbReference type="InterPro" id="IPR000740">
    <property type="entry name" value="GrpE"/>
</dbReference>
<dbReference type="InterPro" id="IPR013805">
    <property type="entry name" value="GrpE_coiled_coil"/>
</dbReference>
<dbReference type="InterPro" id="IPR009012">
    <property type="entry name" value="GrpE_head"/>
</dbReference>
<dbReference type="NCBIfam" id="NF010738">
    <property type="entry name" value="PRK14140.1"/>
    <property type="match status" value="1"/>
</dbReference>
<dbReference type="PANTHER" id="PTHR21237">
    <property type="entry name" value="GRPE PROTEIN"/>
    <property type="match status" value="1"/>
</dbReference>
<dbReference type="PANTHER" id="PTHR21237:SF23">
    <property type="entry name" value="GRPE PROTEIN HOMOLOG, MITOCHONDRIAL"/>
    <property type="match status" value="1"/>
</dbReference>
<dbReference type="Pfam" id="PF01025">
    <property type="entry name" value="GrpE"/>
    <property type="match status" value="1"/>
</dbReference>
<dbReference type="PRINTS" id="PR00773">
    <property type="entry name" value="GRPEPROTEIN"/>
</dbReference>
<dbReference type="SUPFAM" id="SSF58014">
    <property type="entry name" value="Coiled-coil domain of nucleotide exchange factor GrpE"/>
    <property type="match status" value="1"/>
</dbReference>
<dbReference type="SUPFAM" id="SSF51064">
    <property type="entry name" value="Head domain of nucleotide exchange factor GrpE"/>
    <property type="match status" value="1"/>
</dbReference>
<dbReference type="PROSITE" id="PS01071">
    <property type="entry name" value="GRPE"/>
    <property type="match status" value="1"/>
</dbReference>
<accession>Q8CP16</accession>
<protein>
    <recommendedName>
        <fullName evidence="1">Protein GrpE</fullName>
    </recommendedName>
    <alternativeName>
        <fullName evidence="1">HSP-70 cofactor</fullName>
    </alternativeName>
</protein>
<keyword id="KW-0143">Chaperone</keyword>
<keyword id="KW-0963">Cytoplasm</keyword>
<keyword id="KW-0346">Stress response</keyword>
<gene>
    <name evidence="1" type="primary">grpE</name>
    <name type="ordered locus">SE_1268</name>
</gene>